<organism>
    <name type="scientific">Leptospira biflexa serovar Patoc (strain Patoc 1 / Ames)</name>
    <dbReference type="NCBI Taxonomy" id="355278"/>
    <lineage>
        <taxon>Bacteria</taxon>
        <taxon>Pseudomonadati</taxon>
        <taxon>Spirochaetota</taxon>
        <taxon>Spirochaetia</taxon>
        <taxon>Leptospirales</taxon>
        <taxon>Leptospiraceae</taxon>
        <taxon>Leptospira</taxon>
    </lineage>
</organism>
<protein>
    <recommendedName>
        <fullName evidence="2">Elongation factor Tu</fullName>
        <shortName evidence="2">EF-Tu</shortName>
        <ecNumber evidence="2">3.6.5.3</ecNumber>
    </recommendedName>
</protein>
<dbReference type="EC" id="3.6.5.3" evidence="2"/>
<dbReference type="EMBL" id="CP000777">
    <property type="protein sequence ID" value="ABZ94419.1"/>
    <property type="molecule type" value="Genomic_DNA"/>
</dbReference>
<dbReference type="RefSeq" id="WP_012388941.1">
    <property type="nucleotide sequence ID" value="NC_010842.1"/>
</dbReference>
<dbReference type="SMR" id="B0SAF6"/>
<dbReference type="KEGG" id="lbf:LBF_1915"/>
<dbReference type="HOGENOM" id="CLU_007265_0_0_12"/>
<dbReference type="GO" id="GO:0005829">
    <property type="term" value="C:cytosol"/>
    <property type="evidence" value="ECO:0007669"/>
    <property type="project" value="TreeGrafter"/>
</dbReference>
<dbReference type="GO" id="GO:0005525">
    <property type="term" value="F:GTP binding"/>
    <property type="evidence" value="ECO:0007669"/>
    <property type="project" value="UniProtKB-UniRule"/>
</dbReference>
<dbReference type="GO" id="GO:0003924">
    <property type="term" value="F:GTPase activity"/>
    <property type="evidence" value="ECO:0007669"/>
    <property type="project" value="InterPro"/>
</dbReference>
<dbReference type="GO" id="GO:0003746">
    <property type="term" value="F:translation elongation factor activity"/>
    <property type="evidence" value="ECO:0007669"/>
    <property type="project" value="UniProtKB-UniRule"/>
</dbReference>
<dbReference type="CDD" id="cd01884">
    <property type="entry name" value="EF_Tu"/>
    <property type="match status" value="1"/>
</dbReference>
<dbReference type="CDD" id="cd03697">
    <property type="entry name" value="EFTU_II"/>
    <property type="match status" value="1"/>
</dbReference>
<dbReference type="CDD" id="cd03707">
    <property type="entry name" value="EFTU_III"/>
    <property type="match status" value="1"/>
</dbReference>
<dbReference type="FunFam" id="2.40.30.10:FF:000001">
    <property type="entry name" value="Elongation factor Tu"/>
    <property type="match status" value="1"/>
</dbReference>
<dbReference type="FunFam" id="3.40.50.300:FF:000003">
    <property type="entry name" value="Elongation factor Tu"/>
    <property type="match status" value="1"/>
</dbReference>
<dbReference type="Gene3D" id="3.40.50.300">
    <property type="entry name" value="P-loop containing nucleotide triphosphate hydrolases"/>
    <property type="match status" value="1"/>
</dbReference>
<dbReference type="Gene3D" id="2.40.30.10">
    <property type="entry name" value="Translation factors"/>
    <property type="match status" value="2"/>
</dbReference>
<dbReference type="HAMAP" id="MF_00118_B">
    <property type="entry name" value="EF_Tu_B"/>
    <property type="match status" value="1"/>
</dbReference>
<dbReference type="InterPro" id="IPR041709">
    <property type="entry name" value="EF-Tu_GTP-bd"/>
</dbReference>
<dbReference type="InterPro" id="IPR050055">
    <property type="entry name" value="EF-Tu_GTPase"/>
</dbReference>
<dbReference type="InterPro" id="IPR004161">
    <property type="entry name" value="EFTu-like_2"/>
</dbReference>
<dbReference type="InterPro" id="IPR033720">
    <property type="entry name" value="EFTU_2"/>
</dbReference>
<dbReference type="InterPro" id="IPR031157">
    <property type="entry name" value="G_TR_CS"/>
</dbReference>
<dbReference type="InterPro" id="IPR027417">
    <property type="entry name" value="P-loop_NTPase"/>
</dbReference>
<dbReference type="InterPro" id="IPR005225">
    <property type="entry name" value="Small_GTP-bd"/>
</dbReference>
<dbReference type="InterPro" id="IPR000795">
    <property type="entry name" value="T_Tr_GTP-bd_dom"/>
</dbReference>
<dbReference type="InterPro" id="IPR009000">
    <property type="entry name" value="Transl_B-barrel_sf"/>
</dbReference>
<dbReference type="InterPro" id="IPR009001">
    <property type="entry name" value="Transl_elong_EF1A/Init_IF2_C"/>
</dbReference>
<dbReference type="InterPro" id="IPR004541">
    <property type="entry name" value="Transl_elong_EFTu/EF1A_bac/org"/>
</dbReference>
<dbReference type="InterPro" id="IPR004160">
    <property type="entry name" value="Transl_elong_EFTu/EF1A_C"/>
</dbReference>
<dbReference type="NCBIfam" id="TIGR00485">
    <property type="entry name" value="EF-Tu"/>
    <property type="match status" value="1"/>
</dbReference>
<dbReference type="NCBIfam" id="NF000766">
    <property type="entry name" value="PRK00049.1"/>
    <property type="match status" value="1"/>
</dbReference>
<dbReference type="NCBIfam" id="NF009372">
    <property type="entry name" value="PRK12735.1"/>
    <property type="match status" value="1"/>
</dbReference>
<dbReference type="NCBIfam" id="NF009373">
    <property type="entry name" value="PRK12736.1"/>
    <property type="match status" value="1"/>
</dbReference>
<dbReference type="NCBIfam" id="TIGR00231">
    <property type="entry name" value="small_GTP"/>
    <property type="match status" value="1"/>
</dbReference>
<dbReference type="PANTHER" id="PTHR43721:SF22">
    <property type="entry name" value="ELONGATION FACTOR TU, MITOCHONDRIAL"/>
    <property type="match status" value="1"/>
</dbReference>
<dbReference type="PANTHER" id="PTHR43721">
    <property type="entry name" value="ELONGATION FACTOR TU-RELATED"/>
    <property type="match status" value="1"/>
</dbReference>
<dbReference type="Pfam" id="PF00009">
    <property type="entry name" value="GTP_EFTU"/>
    <property type="match status" value="1"/>
</dbReference>
<dbReference type="Pfam" id="PF03144">
    <property type="entry name" value="GTP_EFTU_D2"/>
    <property type="match status" value="1"/>
</dbReference>
<dbReference type="Pfam" id="PF03143">
    <property type="entry name" value="GTP_EFTU_D3"/>
    <property type="match status" value="1"/>
</dbReference>
<dbReference type="PRINTS" id="PR00315">
    <property type="entry name" value="ELONGATNFCT"/>
</dbReference>
<dbReference type="SUPFAM" id="SSF50465">
    <property type="entry name" value="EF-Tu/eEF-1alpha/eIF2-gamma C-terminal domain"/>
    <property type="match status" value="1"/>
</dbReference>
<dbReference type="SUPFAM" id="SSF52540">
    <property type="entry name" value="P-loop containing nucleoside triphosphate hydrolases"/>
    <property type="match status" value="1"/>
</dbReference>
<dbReference type="SUPFAM" id="SSF50447">
    <property type="entry name" value="Translation proteins"/>
    <property type="match status" value="1"/>
</dbReference>
<dbReference type="PROSITE" id="PS00301">
    <property type="entry name" value="G_TR_1"/>
    <property type="match status" value="1"/>
</dbReference>
<dbReference type="PROSITE" id="PS51722">
    <property type="entry name" value="G_TR_2"/>
    <property type="match status" value="1"/>
</dbReference>
<comment type="function">
    <text evidence="2">GTP hydrolase that promotes the GTP-dependent binding of aminoacyl-tRNA to the A-site of ribosomes during protein biosynthesis.</text>
</comment>
<comment type="catalytic activity">
    <reaction evidence="2">
        <text>GTP + H2O = GDP + phosphate + H(+)</text>
        <dbReference type="Rhea" id="RHEA:19669"/>
        <dbReference type="ChEBI" id="CHEBI:15377"/>
        <dbReference type="ChEBI" id="CHEBI:15378"/>
        <dbReference type="ChEBI" id="CHEBI:37565"/>
        <dbReference type="ChEBI" id="CHEBI:43474"/>
        <dbReference type="ChEBI" id="CHEBI:58189"/>
        <dbReference type="EC" id="3.6.5.3"/>
    </reaction>
    <physiologicalReaction direction="left-to-right" evidence="2">
        <dbReference type="Rhea" id="RHEA:19670"/>
    </physiologicalReaction>
</comment>
<comment type="subunit">
    <text evidence="2">Monomer.</text>
</comment>
<comment type="subcellular location">
    <subcellularLocation>
        <location evidence="2">Cytoplasm</location>
    </subcellularLocation>
</comment>
<comment type="similarity">
    <text evidence="2">Belongs to the TRAFAC class translation factor GTPase superfamily. Classic translation factor GTPase family. EF-Tu/EF-1A subfamily.</text>
</comment>
<proteinExistence type="inferred from homology"/>
<name>EFTU_LEPBA</name>
<evidence type="ECO:0000250" key="1"/>
<evidence type="ECO:0000255" key="2">
    <source>
        <dbReference type="HAMAP-Rule" id="MF_00118"/>
    </source>
</evidence>
<accession>B0SAF6</accession>
<reference key="1">
    <citation type="journal article" date="2008" name="PLoS ONE">
        <title>Genome sequence of the saprophyte Leptospira biflexa provides insights into the evolution of Leptospira and the pathogenesis of leptospirosis.</title>
        <authorList>
            <person name="Picardeau M."/>
            <person name="Bulach D.M."/>
            <person name="Bouchier C."/>
            <person name="Zuerner R.L."/>
            <person name="Zidane N."/>
            <person name="Wilson P.J."/>
            <person name="Creno S."/>
            <person name="Kuczek E.S."/>
            <person name="Bommezzadri S."/>
            <person name="Davis J.C."/>
            <person name="McGrath A."/>
            <person name="Johnson M.J."/>
            <person name="Boursaux-Eude C."/>
            <person name="Seemann T."/>
            <person name="Rouy Z."/>
            <person name="Coppel R.L."/>
            <person name="Rood J.I."/>
            <person name="Lajus A."/>
            <person name="Davies J.K."/>
            <person name="Medigue C."/>
            <person name="Adler B."/>
        </authorList>
    </citation>
    <scope>NUCLEOTIDE SEQUENCE [LARGE SCALE GENOMIC DNA]</scope>
    <source>
        <strain>Patoc 1 / Ames</strain>
    </source>
</reference>
<feature type="chain" id="PRO_1000095072" description="Elongation factor Tu">
    <location>
        <begin position="1"/>
        <end position="401"/>
    </location>
</feature>
<feature type="domain" description="tr-type G">
    <location>
        <begin position="10"/>
        <end position="211"/>
    </location>
</feature>
<feature type="region of interest" description="G1" evidence="1">
    <location>
        <begin position="19"/>
        <end position="26"/>
    </location>
</feature>
<feature type="region of interest" description="G2" evidence="1">
    <location>
        <begin position="62"/>
        <end position="66"/>
    </location>
</feature>
<feature type="region of interest" description="G3" evidence="1">
    <location>
        <begin position="83"/>
        <end position="86"/>
    </location>
</feature>
<feature type="region of interest" description="G4" evidence="1">
    <location>
        <begin position="138"/>
        <end position="141"/>
    </location>
</feature>
<feature type="region of interest" description="G5" evidence="1">
    <location>
        <begin position="179"/>
        <end position="181"/>
    </location>
</feature>
<feature type="binding site" evidence="2">
    <location>
        <begin position="19"/>
        <end position="26"/>
    </location>
    <ligand>
        <name>GTP</name>
        <dbReference type="ChEBI" id="CHEBI:37565"/>
    </ligand>
</feature>
<feature type="binding site" evidence="2">
    <location>
        <position position="26"/>
    </location>
    <ligand>
        <name>Mg(2+)</name>
        <dbReference type="ChEBI" id="CHEBI:18420"/>
    </ligand>
</feature>
<feature type="binding site" evidence="2">
    <location>
        <begin position="83"/>
        <end position="87"/>
    </location>
    <ligand>
        <name>GTP</name>
        <dbReference type="ChEBI" id="CHEBI:37565"/>
    </ligand>
</feature>
<feature type="binding site" evidence="2">
    <location>
        <begin position="138"/>
        <end position="141"/>
    </location>
    <ligand>
        <name>GTP</name>
        <dbReference type="ChEBI" id="CHEBI:37565"/>
    </ligand>
</feature>
<keyword id="KW-0963">Cytoplasm</keyword>
<keyword id="KW-0251">Elongation factor</keyword>
<keyword id="KW-0342">GTP-binding</keyword>
<keyword id="KW-0378">Hydrolase</keyword>
<keyword id="KW-0460">Magnesium</keyword>
<keyword id="KW-0479">Metal-binding</keyword>
<keyword id="KW-0547">Nucleotide-binding</keyword>
<keyword id="KW-0648">Protein biosynthesis</keyword>
<sequence length="401" mass="43925">MAKEKFDRSKPHLNIGTIGHVDHGKTTLTAAITTTLAKLVGGKNKAIAYDQIDNAPEEKARGITIATSHQEYETPNRHYAHVDCPGHADYVKNMITGAAQMDAAILVVSATDGAMPQTKEHILLARQVGVPYIVVYLNKADMLAADERDDMVEMVKEEIKDLLNKYNFPGDKTPFISGSALKALEGEDSDLGMKSILKLMEAVDTYVPNPTRIVDKPFLMPVEDVFSITGRGTVATGRVEQGVLKINDEIEIVGIRDTTKSVVTGIEMFRKLLDQAEAGDNIGALLRGTKKEDIERGQVLAKPGTITPHRKFKAEVYVLTKDEGGRHTPFFNNYRPQFYFRTTDITGVCNLPGGMEMVMPGDNVTMSIELIHPIAMDQGLKFAIREGGRTIGSGVVAEIVE</sequence>
<gene>
    <name evidence="2" type="primary">tuf</name>
    <name type="ordered locus">LBF_1915</name>
</gene>